<evidence type="ECO:0000250" key="1"/>
<evidence type="ECO:0000255" key="2"/>
<evidence type="ECO:0000255" key="3">
    <source>
        <dbReference type="PROSITE-ProRule" id="PRU00040"/>
    </source>
</evidence>
<evidence type="ECO:0000256" key="4">
    <source>
        <dbReference type="SAM" id="MobiDB-lite"/>
    </source>
</evidence>
<evidence type="ECO:0000269" key="5">
    <source>
    </source>
</evidence>
<sequence length="742" mass="81837">MKDDFAEEEEVQSFGYKRFGIQEGTQCTKCKNNWALKFSIILLYILCVLLTITIAILGYKVVEKMDNVTGGLETSHRRYTEKLTEVESDLKKLDDQAGQKALNTNTELSSFRSDILALRQQLHDIAEKTTRNKDTLEKLQESGNVLDDRQSQIRSALDSNSFMIISVNKTLQAYTGYINNLQQDTSNIQSDLQNQVHSHNVVIMNLNNLNLTQIQQRNLISVLQKSMEDKSLAILRIKNDFQNLQQVVLQARKDTDWLKEKVQNLQTLAANNSALAKANNDTLEDMNNQLSSFSGQMENISTIAQANEQNLKDLQEQHKEYENRTSAKFNQLEERFQVFETDIVNIISNISYTAHHLRTLTSNLNEVRTTCTDTLSKHSDELIFMNSTLANIRLDSASLKMQQDLMRSRLDVEVANLSVIMEEMKLVDSKHGQLIKNFTILQGPPGPRGPKGDRGPQGPLGPAGLKGQKGEKGEPGPPGPAGEKGPPGPIGPPGEKGGKGSRGSPGSKGQRGSPGKTGLPGPSGDPGPPGPQGKDGPQGPQGPPGFQGLQGTVGEPGVPGPRGLPGLPGVPGLPGPKGPPGPPGPPGPGMPMALQSEPTSVPEANGCSPHWKNYTEKCYYFSIEREIFEEAKLFCEEKASRLVIINNKEEQQWIKRQISGKGSFWIGLTDSEKENEWRWLDGSLPLYTNWKTGQPDNWNHGHGPGEDCAGLIYAGLWNDFYCEDVNNFICEKDMDKEQIFGV</sequence>
<reference key="1">
    <citation type="journal article" date="2006" name="Mol. Immunol.">
        <title>Characterization and expression sites of newly identified chicken collectins.</title>
        <authorList>
            <person name="Hogenkamp A."/>
            <person name="van Eijk M."/>
            <person name="van Dijk A."/>
            <person name="van Asten A.J.A.M."/>
            <person name="Veldhuizen E.J.A."/>
            <person name="Haagsman H.P."/>
        </authorList>
    </citation>
    <scope>NUCLEOTIDE SEQUENCE [MRNA]</scope>
    <scope>TISSUE SPECIFICITY</scope>
</reference>
<gene>
    <name type="primary">COLEC12</name>
    <name type="synonym">CL3</name>
</gene>
<proteinExistence type="evidence at transcript level"/>
<dbReference type="EMBL" id="DQ157755">
    <property type="protein sequence ID" value="AAZ80767.1"/>
    <property type="molecule type" value="mRNA"/>
</dbReference>
<dbReference type="RefSeq" id="NP_001034688.1">
    <property type="nucleotide sequence ID" value="NM_001039599.1"/>
</dbReference>
<dbReference type="SMR" id="Q2LK54"/>
<dbReference type="FunCoup" id="Q2LK54">
    <property type="interactions" value="81"/>
</dbReference>
<dbReference type="STRING" id="9031.ENSGALP00000030293"/>
<dbReference type="PaxDb" id="9031-ENSGALP00000030293"/>
<dbReference type="GeneID" id="421061"/>
<dbReference type="KEGG" id="gga:421061"/>
<dbReference type="CTD" id="81035"/>
<dbReference type="VEuPathDB" id="HostDB:geneid_421061"/>
<dbReference type="eggNOG" id="ENOG502QQKQ">
    <property type="taxonomic scope" value="Eukaryota"/>
</dbReference>
<dbReference type="InParanoid" id="Q2LK54"/>
<dbReference type="OrthoDB" id="9896688at2759"/>
<dbReference type="PhylomeDB" id="Q2LK54"/>
<dbReference type="PRO" id="PR:Q2LK54"/>
<dbReference type="Proteomes" id="UP000000539">
    <property type="component" value="Unassembled WGS sequence"/>
</dbReference>
<dbReference type="GO" id="GO:0005581">
    <property type="term" value="C:collagen trimer"/>
    <property type="evidence" value="ECO:0007669"/>
    <property type="project" value="UniProtKB-KW"/>
</dbReference>
<dbReference type="GO" id="GO:0062023">
    <property type="term" value="C:collagen-containing extracellular matrix"/>
    <property type="evidence" value="ECO:0000318"/>
    <property type="project" value="GO_Central"/>
</dbReference>
<dbReference type="GO" id="GO:0005615">
    <property type="term" value="C:extracellular space"/>
    <property type="evidence" value="ECO:0000318"/>
    <property type="project" value="GO_Central"/>
</dbReference>
<dbReference type="GO" id="GO:0016020">
    <property type="term" value="C:membrane"/>
    <property type="evidence" value="ECO:0007669"/>
    <property type="project" value="UniProtKB-SubCell"/>
</dbReference>
<dbReference type="GO" id="GO:0030246">
    <property type="term" value="F:carbohydrate binding"/>
    <property type="evidence" value="ECO:0007669"/>
    <property type="project" value="UniProtKB-KW"/>
</dbReference>
<dbReference type="GO" id="GO:0030169">
    <property type="term" value="F:low-density lipoprotein particle binding"/>
    <property type="evidence" value="ECO:0000318"/>
    <property type="project" value="GO_Central"/>
</dbReference>
<dbReference type="GO" id="GO:0046872">
    <property type="term" value="F:metal ion binding"/>
    <property type="evidence" value="ECO:0007669"/>
    <property type="project" value="UniProtKB-KW"/>
</dbReference>
<dbReference type="GO" id="GO:0038187">
    <property type="term" value="F:pattern recognition receptor activity"/>
    <property type="evidence" value="ECO:0000318"/>
    <property type="project" value="GO_Central"/>
</dbReference>
<dbReference type="GO" id="GO:0006910">
    <property type="term" value="P:phagocytosis, recognition"/>
    <property type="evidence" value="ECO:0000318"/>
    <property type="project" value="GO_Central"/>
</dbReference>
<dbReference type="CDD" id="cd03590">
    <property type="entry name" value="CLECT_DC-SIGN_like"/>
    <property type="match status" value="1"/>
</dbReference>
<dbReference type="FunFam" id="3.10.100.10:FF:000017">
    <property type="entry name" value="collectin-12 isoform X1"/>
    <property type="match status" value="1"/>
</dbReference>
<dbReference type="Gene3D" id="3.10.100.10">
    <property type="entry name" value="Mannose-Binding Protein A, subunit A"/>
    <property type="match status" value="1"/>
</dbReference>
<dbReference type="InterPro" id="IPR001304">
    <property type="entry name" value="C-type_lectin-like"/>
</dbReference>
<dbReference type="InterPro" id="IPR016186">
    <property type="entry name" value="C-type_lectin-like/link_sf"/>
</dbReference>
<dbReference type="InterPro" id="IPR018378">
    <property type="entry name" value="C-type_lectin_CS"/>
</dbReference>
<dbReference type="InterPro" id="IPR033989">
    <property type="entry name" value="CD209-like_CTLD"/>
</dbReference>
<dbReference type="InterPro" id="IPR008160">
    <property type="entry name" value="Collagen"/>
</dbReference>
<dbReference type="InterPro" id="IPR016187">
    <property type="entry name" value="CTDL_fold"/>
</dbReference>
<dbReference type="InterPro" id="IPR052376">
    <property type="entry name" value="Oxidative_Scav/Glycosyltrans"/>
</dbReference>
<dbReference type="PANTHER" id="PTHR39082">
    <property type="entry name" value="PHOSPHOLIPASE C-BETA-2-RELATED"/>
    <property type="match status" value="1"/>
</dbReference>
<dbReference type="PANTHER" id="PTHR39082:SF1">
    <property type="entry name" value="SCAVENGER RECEPTOR CLASS A MEMBER 3"/>
    <property type="match status" value="1"/>
</dbReference>
<dbReference type="Pfam" id="PF01391">
    <property type="entry name" value="Collagen"/>
    <property type="match status" value="3"/>
</dbReference>
<dbReference type="Pfam" id="PF00059">
    <property type="entry name" value="Lectin_C"/>
    <property type="match status" value="1"/>
</dbReference>
<dbReference type="SMART" id="SM00034">
    <property type="entry name" value="CLECT"/>
    <property type="match status" value="1"/>
</dbReference>
<dbReference type="SUPFAM" id="SSF56436">
    <property type="entry name" value="C-type lectin-like"/>
    <property type="match status" value="1"/>
</dbReference>
<dbReference type="PROSITE" id="PS00615">
    <property type="entry name" value="C_TYPE_LECTIN_1"/>
    <property type="match status" value="1"/>
</dbReference>
<dbReference type="PROSITE" id="PS50041">
    <property type="entry name" value="C_TYPE_LECTIN_2"/>
    <property type="match status" value="1"/>
</dbReference>
<protein>
    <recommendedName>
        <fullName>Collectin-12</fullName>
    </recommendedName>
    <alternativeName>
        <fullName>Collectin-3</fullName>
        <shortName>CL-3</shortName>
        <shortName>cCL-3</shortName>
    </alternativeName>
</protein>
<accession>Q2LK54</accession>
<organism>
    <name type="scientific">Gallus gallus</name>
    <name type="common">Chicken</name>
    <dbReference type="NCBI Taxonomy" id="9031"/>
    <lineage>
        <taxon>Eukaryota</taxon>
        <taxon>Metazoa</taxon>
        <taxon>Chordata</taxon>
        <taxon>Craniata</taxon>
        <taxon>Vertebrata</taxon>
        <taxon>Euteleostomi</taxon>
        <taxon>Archelosauria</taxon>
        <taxon>Archosauria</taxon>
        <taxon>Dinosauria</taxon>
        <taxon>Saurischia</taxon>
        <taxon>Theropoda</taxon>
        <taxon>Coelurosauria</taxon>
        <taxon>Aves</taxon>
        <taxon>Neognathae</taxon>
        <taxon>Galloanserae</taxon>
        <taxon>Galliformes</taxon>
        <taxon>Phasianidae</taxon>
        <taxon>Phasianinae</taxon>
        <taxon>Gallus</taxon>
    </lineage>
</organism>
<feature type="chain" id="PRO_0000318684" description="Collectin-12">
    <location>
        <begin position="1"/>
        <end position="742"/>
    </location>
</feature>
<feature type="topological domain" description="Cytoplasmic" evidence="2">
    <location>
        <begin position="1"/>
        <end position="37"/>
    </location>
</feature>
<feature type="transmembrane region" description="Helical; Signal-anchor for type II membrane protein" evidence="2">
    <location>
        <begin position="38"/>
        <end position="58"/>
    </location>
</feature>
<feature type="topological domain" description="Extracellular" evidence="2">
    <location>
        <begin position="59"/>
        <end position="742"/>
    </location>
</feature>
<feature type="domain" description="Collagen-like 1">
    <location>
        <begin position="467"/>
        <end position="526"/>
    </location>
</feature>
<feature type="domain" description="Collagen-like 2">
    <location>
        <begin position="527"/>
        <end position="586"/>
    </location>
</feature>
<feature type="domain" description="C-type lectin" evidence="3">
    <location>
        <begin position="614"/>
        <end position="731"/>
    </location>
</feature>
<feature type="region of interest" description="Disordered" evidence="4">
    <location>
        <begin position="439"/>
        <end position="605"/>
    </location>
</feature>
<feature type="coiled-coil region" evidence="2">
    <location>
        <begin position="71"/>
        <end position="101"/>
    </location>
</feature>
<feature type="coiled-coil region" evidence="2">
    <location>
        <begin position="271"/>
        <end position="334"/>
    </location>
</feature>
<feature type="compositionally biased region" description="Pro residues" evidence="4">
    <location>
        <begin position="475"/>
        <end position="492"/>
    </location>
</feature>
<feature type="compositionally biased region" description="Low complexity" evidence="4">
    <location>
        <begin position="502"/>
        <end position="522"/>
    </location>
</feature>
<feature type="compositionally biased region" description="Low complexity" evidence="4">
    <location>
        <begin position="532"/>
        <end position="556"/>
    </location>
</feature>
<feature type="compositionally biased region" description="Pro residues" evidence="4">
    <location>
        <begin position="571"/>
        <end position="589"/>
    </location>
</feature>
<feature type="binding site" evidence="1">
    <location>
        <position position="644"/>
    </location>
    <ligand>
        <name>Ca(2+)</name>
        <dbReference type="ChEBI" id="CHEBI:29108"/>
        <label>1</label>
    </ligand>
</feature>
<feature type="binding site" evidence="1">
    <location>
        <position position="646"/>
    </location>
    <ligand>
        <name>Ca(2+)</name>
        <dbReference type="ChEBI" id="CHEBI:29108"/>
        <label>1</label>
    </ligand>
</feature>
<feature type="binding site" evidence="1">
    <location>
        <position position="650"/>
    </location>
    <ligand>
        <name>Ca(2+)</name>
        <dbReference type="ChEBI" id="CHEBI:29108"/>
        <label>1</label>
    </ligand>
</feature>
<feature type="binding site" evidence="1">
    <location>
        <position position="670"/>
    </location>
    <ligand>
        <name>Ca(2+)</name>
        <dbReference type="ChEBI" id="CHEBI:29108"/>
        <label>2</label>
    </ligand>
</feature>
<feature type="binding site" evidence="1">
    <location>
        <position position="674"/>
    </location>
    <ligand>
        <name>Ca(2+)</name>
        <dbReference type="ChEBI" id="CHEBI:29108"/>
        <label>2</label>
    </ligand>
</feature>
<feature type="binding site" evidence="1">
    <location>
        <position position="691"/>
    </location>
    <ligand>
        <name>a carbohydrate</name>
        <dbReference type="ChEBI" id="CHEBI:16646"/>
    </ligand>
</feature>
<feature type="binding site" evidence="1">
    <location>
        <position position="694"/>
    </location>
    <ligand>
        <name>a carbohydrate</name>
        <dbReference type="ChEBI" id="CHEBI:16646"/>
    </ligand>
</feature>
<feature type="binding site" evidence="1">
    <location>
        <position position="694"/>
    </location>
    <ligand>
        <name>Ca(2+)</name>
        <dbReference type="ChEBI" id="CHEBI:29108"/>
        <label>3</label>
    </ligand>
</feature>
<feature type="binding site" evidence="1">
    <location>
        <position position="696"/>
    </location>
    <ligand>
        <name>a carbohydrate</name>
        <dbReference type="ChEBI" id="CHEBI:16646"/>
    </ligand>
</feature>
<feature type="binding site" evidence="1">
    <location>
        <position position="696"/>
    </location>
    <ligand>
        <name>Ca(2+)</name>
        <dbReference type="ChEBI" id="CHEBI:29108"/>
        <label>3</label>
    </ligand>
</feature>
<feature type="binding site" evidence="1">
    <location>
        <position position="697"/>
    </location>
    <ligand>
        <name>Ca(2+)</name>
        <dbReference type="ChEBI" id="CHEBI:29108"/>
        <label>2</label>
    </ligand>
</feature>
<feature type="binding site" evidence="1">
    <location>
        <position position="706"/>
    </location>
    <ligand>
        <name>a carbohydrate</name>
        <dbReference type="ChEBI" id="CHEBI:16646"/>
    </ligand>
</feature>
<feature type="binding site" evidence="1">
    <location>
        <position position="706"/>
    </location>
    <ligand>
        <name>Ca(2+)</name>
        <dbReference type="ChEBI" id="CHEBI:29108"/>
        <label>2</label>
    </ligand>
</feature>
<feature type="binding site" evidence="1">
    <location>
        <position position="706"/>
    </location>
    <ligand>
        <name>Ca(2+)</name>
        <dbReference type="ChEBI" id="CHEBI:29108"/>
        <label>3</label>
    </ligand>
</feature>
<feature type="binding site" evidence="1">
    <location>
        <position position="707"/>
    </location>
    <ligand>
        <name>Ca(2+)</name>
        <dbReference type="ChEBI" id="CHEBI:29108"/>
        <label>2</label>
    </ligand>
</feature>
<feature type="binding site" evidence="1">
    <location>
        <position position="718"/>
    </location>
    <ligand>
        <name>a carbohydrate</name>
        <dbReference type="ChEBI" id="CHEBI:16646"/>
    </ligand>
</feature>
<feature type="binding site" evidence="1">
    <location>
        <position position="718"/>
    </location>
    <ligand>
        <name>Ca(2+)</name>
        <dbReference type="ChEBI" id="CHEBI:29108"/>
        <label>3</label>
    </ligand>
</feature>
<feature type="binding site" evidence="1">
    <location>
        <position position="719"/>
    </location>
    <ligand>
        <name>a carbohydrate</name>
        <dbReference type="ChEBI" id="CHEBI:16646"/>
    </ligand>
</feature>
<feature type="binding site" evidence="1">
    <location>
        <position position="719"/>
    </location>
    <ligand>
        <name>Ca(2+)</name>
        <dbReference type="ChEBI" id="CHEBI:29108"/>
        <label>3</label>
    </ligand>
</feature>
<feature type="binding site" evidence="1">
    <location>
        <position position="731"/>
    </location>
    <ligand>
        <name>Ca(2+)</name>
        <dbReference type="ChEBI" id="CHEBI:29108"/>
        <label>1</label>
    </ligand>
</feature>
<feature type="disulfide bond" evidence="3">
    <location>
        <begin position="607"/>
        <end position="618"/>
    </location>
</feature>
<feature type="disulfide bond" evidence="3">
    <location>
        <begin position="635"/>
        <end position="730"/>
    </location>
</feature>
<feature type="disulfide bond" evidence="3">
    <location>
        <begin position="708"/>
        <end position="722"/>
    </location>
</feature>
<keyword id="KW-0106">Calcium</keyword>
<keyword id="KW-0175">Coiled coil</keyword>
<keyword id="KW-0176">Collagen</keyword>
<keyword id="KW-1015">Disulfide bond</keyword>
<keyword id="KW-0430">Lectin</keyword>
<keyword id="KW-0472">Membrane</keyword>
<keyword id="KW-0479">Metal-binding</keyword>
<keyword id="KW-0675">Receptor</keyword>
<keyword id="KW-1185">Reference proteome</keyword>
<keyword id="KW-0677">Repeat</keyword>
<keyword id="KW-0735">Signal-anchor</keyword>
<keyword id="KW-0812">Transmembrane</keyword>
<keyword id="KW-1133">Transmembrane helix</keyword>
<comment type="function">
    <text evidence="1">Scavenger receptor that displays several functions associated with host defense. Binds to carbohydrates (By similarity).</text>
</comment>
<comment type="subcellular location">
    <subcellularLocation>
        <location>Membrane</location>
        <topology>Single-pass type II membrane protein</topology>
    </subcellularLocation>
</comment>
<comment type="tissue specificity">
    <text evidence="5">Widely expressed.</text>
</comment>
<name>COL12_CHICK</name>